<organism>
    <name type="scientific">Escherichia coli O8 (strain IAI1)</name>
    <dbReference type="NCBI Taxonomy" id="585034"/>
    <lineage>
        <taxon>Bacteria</taxon>
        <taxon>Pseudomonadati</taxon>
        <taxon>Pseudomonadota</taxon>
        <taxon>Gammaproteobacteria</taxon>
        <taxon>Enterobacterales</taxon>
        <taxon>Enterobacteriaceae</taxon>
        <taxon>Escherichia</taxon>
    </lineage>
</organism>
<feature type="chain" id="PRO_1000116968" description="Adenylyl-sulfate kinase">
    <location>
        <begin position="1"/>
        <end position="201"/>
    </location>
</feature>
<feature type="active site" description="Phosphoserine intermediate" evidence="1">
    <location>
        <position position="109"/>
    </location>
</feature>
<feature type="binding site" evidence="1">
    <location>
        <begin position="35"/>
        <end position="42"/>
    </location>
    <ligand>
        <name>ATP</name>
        <dbReference type="ChEBI" id="CHEBI:30616"/>
    </ligand>
</feature>
<protein>
    <recommendedName>
        <fullName evidence="1">Adenylyl-sulfate kinase</fullName>
        <ecNumber evidence="1">2.7.1.25</ecNumber>
    </recommendedName>
    <alternativeName>
        <fullName evidence="1">APS kinase</fullName>
    </alternativeName>
    <alternativeName>
        <fullName evidence="1">ATP adenosine-5'-phosphosulfate 3'-phosphotransferase</fullName>
    </alternativeName>
    <alternativeName>
        <fullName evidence="1">Adenosine-5'-phosphosulfate kinase</fullName>
    </alternativeName>
</protein>
<gene>
    <name evidence="1" type="primary">cysC</name>
    <name type="ordered locus">ECIAI1_2852</name>
</gene>
<reference key="1">
    <citation type="journal article" date="2009" name="PLoS Genet.">
        <title>Organised genome dynamics in the Escherichia coli species results in highly diverse adaptive paths.</title>
        <authorList>
            <person name="Touchon M."/>
            <person name="Hoede C."/>
            <person name="Tenaillon O."/>
            <person name="Barbe V."/>
            <person name="Baeriswyl S."/>
            <person name="Bidet P."/>
            <person name="Bingen E."/>
            <person name="Bonacorsi S."/>
            <person name="Bouchier C."/>
            <person name="Bouvet O."/>
            <person name="Calteau A."/>
            <person name="Chiapello H."/>
            <person name="Clermont O."/>
            <person name="Cruveiller S."/>
            <person name="Danchin A."/>
            <person name="Diard M."/>
            <person name="Dossat C."/>
            <person name="Karoui M.E."/>
            <person name="Frapy E."/>
            <person name="Garry L."/>
            <person name="Ghigo J.M."/>
            <person name="Gilles A.M."/>
            <person name="Johnson J."/>
            <person name="Le Bouguenec C."/>
            <person name="Lescat M."/>
            <person name="Mangenot S."/>
            <person name="Martinez-Jehanne V."/>
            <person name="Matic I."/>
            <person name="Nassif X."/>
            <person name="Oztas S."/>
            <person name="Petit M.A."/>
            <person name="Pichon C."/>
            <person name="Rouy Z."/>
            <person name="Ruf C.S."/>
            <person name="Schneider D."/>
            <person name="Tourret J."/>
            <person name="Vacherie B."/>
            <person name="Vallenet D."/>
            <person name="Medigue C."/>
            <person name="Rocha E.P.C."/>
            <person name="Denamur E."/>
        </authorList>
    </citation>
    <scope>NUCLEOTIDE SEQUENCE [LARGE SCALE GENOMIC DNA]</scope>
    <source>
        <strain>IAI1</strain>
    </source>
</reference>
<accession>B7LXG2</accession>
<keyword id="KW-0067">ATP-binding</keyword>
<keyword id="KW-0418">Kinase</keyword>
<keyword id="KW-0547">Nucleotide-binding</keyword>
<keyword id="KW-0597">Phosphoprotein</keyword>
<keyword id="KW-0808">Transferase</keyword>
<sequence>MALHDENVVWHSHPVTVQQRELHHGHRGVVLWFTGLSGSGKSTVAGALEEALHKLGVSTYLLDGDNVRHGLCSDLGFSDADRKENIRRVGEVANLMVEAGLVVLTAFISPHRAERQMVRERVGEGRFIEVFVDTPLAICEARDPKGLYKKARAGELRNFTGIDSVYEAPESAEIHLNGEQLVTNLVQQLLDLLRQNDIIRS</sequence>
<comment type="function">
    <text evidence="1">Catalyzes the synthesis of activated sulfate.</text>
</comment>
<comment type="catalytic activity">
    <reaction evidence="1">
        <text>adenosine 5'-phosphosulfate + ATP = 3'-phosphoadenylyl sulfate + ADP + H(+)</text>
        <dbReference type="Rhea" id="RHEA:24152"/>
        <dbReference type="ChEBI" id="CHEBI:15378"/>
        <dbReference type="ChEBI" id="CHEBI:30616"/>
        <dbReference type="ChEBI" id="CHEBI:58243"/>
        <dbReference type="ChEBI" id="CHEBI:58339"/>
        <dbReference type="ChEBI" id="CHEBI:456216"/>
        <dbReference type="EC" id="2.7.1.25"/>
    </reaction>
</comment>
<comment type="pathway">
    <text evidence="1">Sulfur metabolism; hydrogen sulfide biosynthesis; sulfite from sulfate: step 2/3.</text>
</comment>
<comment type="similarity">
    <text evidence="1">Belongs to the APS kinase family.</text>
</comment>
<dbReference type="EC" id="2.7.1.25" evidence="1"/>
<dbReference type="EMBL" id="CU928160">
    <property type="protein sequence ID" value="CAQ99674.1"/>
    <property type="molecule type" value="Genomic_DNA"/>
</dbReference>
<dbReference type="RefSeq" id="WP_001173673.1">
    <property type="nucleotide sequence ID" value="NC_011741.1"/>
</dbReference>
<dbReference type="SMR" id="B7LXG2"/>
<dbReference type="GeneID" id="93779256"/>
<dbReference type="KEGG" id="ecr:ECIAI1_2852"/>
<dbReference type="HOGENOM" id="CLU_046932_1_0_6"/>
<dbReference type="UniPathway" id="UPA00140">
    <property type="reaction ID" value="UER00205"/>
</dbReference>
<dbReference type="GO" id="GO:0004020">
    <property type="term" value="F:adenylylsulfate kinase activity"/>
    <property type="evidence" value="ECO:0007669"/>
    <property type="project" value="UniProtKB-UniRule"/>
</dbReference>
<dbReference type="GO" id="GO:0005524">
    <property type="term" value="F:ATP binding"/>
    <property type="evidence" value="ECO:0007669"/>
    <property type="project" value="UniProtKB-UniRule"/>
</dbReference>
<dbReference type="GO" id="GO:0070814">
    <property type="term" value="P:hydrogen sulfide biosynthetic process"/>
    <property type="evidence" value="ECO:0007669"/>
    <property type="project" value="UniProtKB-UniRule"/>
</dbReference>
<dbReference type="GO" id="GO:0000103">
    <property type="term" value="P:sulfate assimilation"/>
    <property type="evidence" value="ECO:0007669"/>
    <property type="project" value="UniProtKB-UniRule"/>
</dbReference>
<dbReference type="CDD" id="cd02027">
    <property type="entry name" value="APSK"/>
    <property type="match status" value="1"/>
</dbReference>
<dbReference type="FunFam" id="3.40.50.300:FF:000212">
    <property type="entry name" value="Adenylyl-sulfate kinase"/>
    <property type="match status" value="1"/>
</dbReference>
<dbReference type="Gene3D" id="3.40.50.300">
    <property type="entry name" value="P-loop containing nucleotide triphosphate hydrolases"/>
    <property type="match status" value="1"/>
</dbReference>
<dbReference type="HAMAP" id="MF_00065">
    <property type="entry name" value="Adenylyl_sulf_kinase"/>
    <property type="match status" value="1"/>
</dbReference>
<dbReference type="InterPro" id="IPR002891">
    <property type="entry name" value="APS_kinase"/>
</dbReference>
<dbReference type="InterPro" id="IPR027417">
    <property type="entry name" value="P-loop_NTPase"/>
</dbReference>
<dbReference type="NCBIfam" id="TIGR00455">
    <property type="entry name" value="apsK"/>
    <property type="match status" value="1"/>
</dbReference>
<dbReference type="NCBIfam" id="NF003013">
    <property type="entry name" value="PRK03846.1"/>
    <property type="match status" value="1"/>
</dbReference>
<dbReference type="PANTHER" id="PTHR11055:SF63">
    <property type="entry name" value="ADENYLYL-SULFATE KINASE 1, CHLOROPLASTIC"/>
    <property type="match status" value="1"/>
</dbReference>
<dbReference type="PANTHER" id="PTHR11055">
    <property type="entry name" value="BIFUNCTIONAL 3'-PHOSPHOADENOSINE 5'-PHOSPHOSULFATE SYNTHASE"/>
    <property type="match status" value="1"/>
</dbReference>
<dbReference type="Pfam" id="PF01583">
    <property type="entry name" value="APS_kinase"/>
    <property type="match status" value="1"/>
</dbReference>
<dbReference type="SUPFAM" id="SSF52540">
    <property type="entry name" value="P-loop containing nucleoside triphosphate hydrolases"/>
    <property type="match status" value="1"/>
</dbReference>
<proteinExistence type="inferred from homology"/>
<evidence type="ECO:0000255" key="1">
    <source>
        <dbReference type="HAMAP-Rule" id="MF_00065"/>
    </source>
</evidence>
<name>CYSC_ECO8A</name>